<accession>Q5HGU6</accession>
<sequence length="352" mass="40107">MSEQQTMSELKQQALVDINEANDERALQEVKVKYLGKKGSVSGLMKLMKDLPNEDKPAFGQKVNELRQTIQNELDERQQMLVKEKLNKQLAEETIDVSLPGRHIEIGSKHPLTRTIEEIEDLFLGLGYEIVNGYEVEQDHYNFEMLNLPKSHPARDMQDSFYITDEILLRTHTSPVQARTMESRHGQGPVKIICPGKVYRRDSDDATHSHQFTQIEGLVVDKNVKMSDLKGTLELLAKKLFGADREIRLRPSYFPFTEPSVEVDVSCFKCKGKGCNVCKHTGWIEILGAGMVHPNVLEMAGFDSSEYSGFAFGMGPDRIAMLKYGIEDIRHFYTNDVRFLDQFKAVEDRGDM</sequence>
<feature type="chain" id="PRO_0000126759" description="Phenylalanine--tRNA ligase alpha subunit">
    <location>
        <begin position="1"/>
        <end position="352"/>
    </location>
</feature>
<feature type="binding site" evidence="1">
    <location>
        <position position="258"/>
    </location>
    <ligand>
        <name>Mg(2+)</name>
        <dbReference type="ChEBI" id="CHEBI:18420"/>
        <note>shared with beta subunit</note>
    </ligand>
</feature>
<name>SYFA_STAAC</name>
<dbReference type="EC" id="6.1.1.20" evidence="1"/>
<dbReference type="EMBL" id="CP000046">
    <property type="protein sequence ID" value="AAW38027.1"/>
    <property type="molecule type" value="Genomic_DNA"/>
</dbReference>
<dbReference type="RefSeq" id="WP_000003559.1">
    <property type="nucleotide sequence ID" value="NZ_JBGOFO010000002.1"/>
</dbReference>
<dbReference type="SMR" id="Q5HGU6"/>
<dbReference type="KEGG" id="sac:SACOL1148"/>
<dbReference type="HOGENOM" id="CLU_025086_0_1_9"/>
<dbReference type="Proteomes" id="UP000000530">
    <property type="component" value="Chromosome"/>
</dbReference>
<dbReference type="GO" id="GO:0005737">
    <property type="term" value="C:cytoplasm"/>
    <property type="evidence" value="ECO:0007669"/>
    <property type="project" value="UniProtKB-SubCell"/>
</dbReference>
<dbReference type="GO" id="GO:0005524">
    <property type="term" value="F:ATP binding"/>
    <property type="evidence" value="ECO:0007669"/>
    <property type="project" value="UniProtKB-UniRule"/>
</dbReference>
<dbReference type="GO" id="GO:0140096">
    <property type="term" value="F:catalytic activity, acting on a protein"/>
    <property type="evidence" value="ECO:0007669"/>
    <property type="project" value="UniProtKB-ARBA"/>
</dbReference>
<dbReference type="GO" id="GO:0000287">
    <property type="term" value="F:magnesium ion binding"/>
    <property type="evidence" value="ECO:0007669"/>
    <property type="project" value="UniProtKB-UniRule"/>
</dbReference>
<dbReference type="GO" id="GO:0004826">
    <property type="term" value="F:phenylalanine-tRNA ligase activity"/>
    <property type="evidence" value="ECO:0007669"/>
    <property type="project" value="UniProtKB-UniRule"/>
</dbReference>
<dbReference type="GO" id="GO:0016740">
    <property type="term" value="F:transferase activity"/>
    <property type="evidence" value="ECO:0007669"/>
    <property type="project" value="UniProtKB-ARBA"/>
</dbReference>
<dbReference type="GO" id="GO:0000049">
    <property type="term" value="F:tRNA binding"/>
    <property type="evidence" value="ECO:0007669"/>
    <property type="project" value="InterPro"/>
</dbReference>
<dbReference type="GO" id="GO:0006432">
    <property type="term" value="P:phenylalanyl-tRNA aminoacylation"/>
    <property type="evidence" value="ECO:0007669"/>
    <property type="project" value="UniProtKB-UniRule"/>
</dbReference>
<dbReference type="CDD" id="cd00496">
    <property type="entry name" value="PheRS_alpha_core"/>
    <property type="match status" value="1"/>
</dbReference>
<dbReference type="FunFam" id="3.30.930.10:FF:000003">
    <property type="entry name" value="Phenylalanine--tRNA ligase alpha subunit"/>
    <property type="match status" value="1"/>
</dbReference>
<dbReference type="Gene3D" id="3.30.930.10">
    <property type="entry name" value="Bira Bifunctional Protein, Domain 2"/>
    <property type="match status" value="1"/>
</dbReference>
<dbReference type="HAMAP" id="MF_00281">
    <property type="entry name" value="Phe_tRNA_synth_alpha1"/>
    <property type="match status" value="1"/>
</dbReference>
<dbReference type="InterPro" id="IPR006195">
    <property type="entry name" value="aa-tRNA-synth_II"/>
</dbReference>
<dbReference type="InterPro" id="IPR045864">
    <property type="entry name" value="aa-tRNA-synth_II/BPL/LPL"/>
</dbReference>
<dbReference type="InterPro" id="IPR004529">
    <property type="entry name" value="Phe-tRNA-synth_IIc_asu"/>
</dbReference>
<dbReference type="InterPro" id="IPR004188">
    <property type="entry name" value="Phe-tRNA_ligase_II_N"/>
</dbReference>
<dbReference type="InterPro" id="IPR022911">
    <property type="entry name" value="Phe_tRNA_ligase_alpha1_bac"/>
</dbReference>
<dbReference type="InterPro" id="IPR002319">
    <property type="entry name" value="Phenylalanyl-tRNA_Synthase"/>
</dbReference>
<dbReference type="InterPro" id="IPR010978">
    <property type="entry name" value="tRNA-bd_arm"/>
</dbReference>
<dbReference type="NCBIfam" id="TIGR00468">
    <property type="entry name" value="pheS"/>
    <property type="match status" value="1"/>
</dbReference>
<dbReference type="PANTHER" id="PTHR11538:SF41">
    <property type="entry name" value="PHENYLALANINE--TRNA LIGASE, MITOCHONDRIAL"/>
    <property type="match status" value="1"/>
</dbReference>
<dbReference type="PANTHER" id="PTHR11538">
    <property type="entry name" value="PHENYLALANYL-TRNA SYNTHETASE"/>
    <property type="match status" value="1"/>
</dbReference>
<dbReference type="Pfam" id="PF02912">
    <property type="entry name" value="Phe_tRNA-synt_N"/>
    <property type="match status" value="1"/>
</dbReference>
<dbReference type="Pfam" id="PF01409">
    <property type="entry name" value="tRNA-synt_2d"/>
    <property type="match status" value="1"/>
</dbReference>
<dbReference type="SUPFAM" id="SSF55681">
    <property type="entry name" value="Class II aaRS and biotin synthetases"/>
    <property type="match status" value="1"/>
</dbReference>
<dbReference type="SUPFAM" id="SSF46589">
    <property type="entry name" value="tRNA-binding arm"/>
    <property type="match status" value="1"/>
</dbReference>
<dbReference type="PROSITE" id="PS50862">
    <property type="entry name" value="AA_TRNA_LIGASE_II"/>
    <property type="match status" value="1"/>
</dbReference>
<protein>
    <recommendedName>
        <fullName evidence="1">Phenylalanine--tRNA ligase alpha subunit</fullName>
        <ecNumber evidence="1">6.1.1.20</ecNumber>
    </recommendedName>
    <alternativeName>
        <fullName evidence="1">Phenylalanyl-tRNA synthetase alpha subunit</fullName>
        <shortName evidence="1">PheRS</shortName>
    </alternativeName>
</protein>
<proteinExistence type="inferred from homology"/>
<gene>
    <name evidence="1" type="primary">pheS</name>
    <name type="ordered locus">SACOL1148</name>
</gene>
<evidence type="ECO:0000255" key="1">
    <source>
        <dbReference type="HAMAP-Rule" id="MF_00281"/>
    </source>
</evidence>
<comment type="catalytic activity">
    <reaction evidence="1">
        <text>tRNA(Phe) + L-phenylalanine + ATP = L-phenylalanyl-tRNA(Phe) + AMP + diphosphate + H(+)</text>
        <dbReference type="Rhea" id="RHEA:19413"/>
        <dbReference type="Rhea" id="RHEA-COMP:9668"/>
        <dbReference type="Rhea" id="RHEA-COMP:9699"/>
        <dbReference type="ChEBI" id="CHEBI:15378"/>
        <dbReference type="ChEBI" id="CHEBI:30616"/>
        <dbReference type="ChEBI" id="CHEBI:33019"/>
        <dbReference type="ChEBI" id="CHEBI:58095"/>
        <dbReference type="ChEBI" id="CHEBI:78442"/>
        <dbReference type="ChEBI" id="CHEBI:78531"/>
        <dbReference type="ChEBI" id="CHEBI:456215"/>
        <dbReference type="EC" id="6.1.1.20"/>
    </reaction>
</comment>
<comment type="cofactor">
    <cofactor evidence="1">
        <name>Mg(2+)</name>
        <dbReference type="ChEBI" id="CHEBI:18420"/>
    </cofactor>
    <text evidence="1">Binds 2 magnesium ions per tetramer.</text>
</comment>
<comment type="subunit">
    <text evidence="1">Tetramer of two alpha and two beta subunits.</text>
</comment>
<comment type="subcellular location">
    <subcellularLocation>
        <location evidence="1">Cytoplasm</location>
    </subcellularLocation>
</comment>
<comment type="similarity">
    <text evidence="1">Belongs to the class-II aminoacyl-tRNA synthetase family. Phe-tRNA synthetase alpha subunit type 1 subfamily.</text>
</comment>
<organism>
    <name type="scientific">Staphylococcus aureus (strain COL)</name>
    <dbReference type="NCBI Taxonomy" id="93062"/>
    <lineage>
        <taxon>Bacteria</taxon>
        <taxon>Bacillati</taxon>
        <taxon>Bacillota</taxon>
        <taxon>Bacilli</taxon>
        <taxon>Bacillales</taxon>
        <taxon>Staphylococcaceae</taxon>
        <taxon>Staphylococcus</taxon>
    </lineage>
</organism>
<keyword id="KW-0030">Aminoacyl-tRNA synthetase</keyword>
<keyword id="KW-0067">ATP-binding</keyword>
<keyword id="KW-0963">Cytoplasm</keyword>
<keyword id="KW-0436">Ligase</keyword>
<keyword id="KW-0460">Magnesium</keyword>
<keyword id="KW-0479">Metal-binding</keyword>
<keyword id="KW-0547">Nucleotide-binding</keyword>
<keyword id="KW-0648">Protein biosynthesis</keyword>
<reference key="1">
    <citation type="journal article" date="2005" name="J. Bacteriol.">
        <title>Insights on evolution of virulence and resistance from the complete genome analysis of an early methicillin-resistant Staphylococcus aureus strain and a biofilm-producing methicillin-resistant Staphylococcus epidermidis strain.</title>
        <authorList>
            <person name="Gill S.R."/>
            <person name="Fouts D.E."/>
            <person name="Archer G.L."/>
            <person name="Mongodin E.F."/>
            <person name="DeBoy R.T."/>
            <person name="Ravel J."/>
            <person name="Paulsen I.T."/>
            <person name="Kolonay J.F."/>
            <person name="Brinkac L.M."/>
            <person name="Beanan M.J."/>
            <person name="Dodson R.J."/>
            <person name="Daugherty S.C."/>
            <person name="Madupu R."/>
            <person name="Angiuoli S.V."/>
            <person name="Durkin A.S."/>
            <person name="Haft D.H."/>
            <person name="Vamathevan J.J."/>
            <person name="Khouri H."/>
            <person name="Utterback T.R."/>
            <person name="Lee C."/>
            <person name="Dimitrov G."/>
            <person name="Jiang L."/>
            <person name="Qin H."/>
            <person name="Weidman J."/>
            <person name="Tran K."/>
            <person name="Kang K.H."/>
            <person name="Hance I.R."/>
            <person name="Nelson K.E."/>
            <person name="Fraser C.M."/>
        </authorList>
    </citation>
    <scope>NUCLEOTIDE SEQUENCE [LARGE SCALE GENOMIC DNA]</scope>
    <source>
        <strain>COL</strain>
    </source>
</reference>